<evidence type="ECO:0000255" key="1">
    <source>
        <dbReference type="HAMAP-Rule" id="MF_00338"/>
    </source>
</evidence>
<dbReference type="EMBL" id="CP000038">
    <property type="protein sequence ID" value="AAZ87595.1"/>
    <property type="molecule type" value="Genomic_DNA"/>
</dbReference>
<dbReference type="RefSeq" id="WP_001160737.1">
    <property type="nucleotide sequence ID" value="NC_007384.1"/>
</dbReference>
<dbReference type="SMR" id="Q3Z3R7"/>
<dbReference type="KEGG" id="ssn:SSON_0852"/>
<dbReference type="HOGENOM" id="CLU_117144_3_0_6"/>
<dbReference type="Proteomes" id="UP000002529">
    <property type="component" value="Chromosome"/>
</dbReference>
<dbReference type="Gene3D" id="3.30.110.70">
    <property type="entry name" value="Hypothetical protein apc22750. Chain B"/>
    <property type="match status" value="1"/>
</dbReference>
<dbReference type="HAMAP" id="MF_00338">
    <property type="entry name" value="UPF0145"/>
    <property type="match status" value="1"/>
</dbReference>
<dbReference type="InterPro" id="IPR035439">
    <property type="entry name" value="UPF0145_dom_sf"/>
</dbReference>
<dbReference type="InterPro" id="IPR002765">
    <property type="entry name" value="UPF0145_YbjQ-like"/>
</dbReference>
<dbReference type="NCBIfam" id="NF002776">
    <property type="entry name" value="PRK02877.1"/>
    <property type="match status" value="1"/>
</dbReference>
<dbReference type="PANTHER" id="PTHR34068">
    <property type="entry name" value="UPF0145 PROTEIN YBJQ"/>
    <property type="match status" value="1"/>
</dbReference>
<dbReference type="PANTHER" id="PTHR34068:SF1">
    <property type="entry name" value="UPF0145 PROTEIN YBJQ"/>
    <property type="match status" value="1"/>
</dbReference>
<dbReference type="Pfam" id="PF01906">
    <property type="entry name" value="YbjQ_1"/>
    <property type="match status" value="1"/>
</dbReference>
<dbReference type="SUPFAM" id="SSF117782">
    <property type="entry name" value="YbjQ-like"/>
    <property type="match status" value="1"/>
</dbReference>
<organism>
    <name type="scientific">Shigella sonnei (strain Ss046)</name>
    <dbReference type="NCBI Taxonomy" id="300269"/>
    <lineage>
        <taxon>Bacteria</taxon>
        <taxon>Pseudomonadati</taxon>
        <taxon>Pseudomonadota</taxon>
        <taxon>Gammaproteobacteria</taxon>
        <taxon>Enterobacterales</taxon>
        <taxon>Enterobacteriaceae</taxon>
        <taxon>Shigella</taxon>
    </lineage>
</organism>
<reference key="1">
    <citation type="journal article" date="2005" name="Nucleic Acids Res.">
        <title>Genome dynamics and diversity of Shigella species, the etiologic agents of bacillary dysentery.</title>
        <authorList>
            <person name="Yang F."/>
            <person name="Yang J."/>
            <person name="Zhang X."/>
            <person name="Chen L."/>
            <person name="Jiang Y."/>
            <person name="Yan Y."/>
            <person name="Tang X."/>
            <person name="Wang J."/>
            <person name="Xiong Z."/>
            <person name="Dong J."/>
            <person name="Xue Y."/>
            <person name="Zhu Y."/>
            <person name="Xu X."/>
            <person name="Sun L."/>
            <person name="Chen S."/>
            <person name="Nie H."/>
            <person name="Peng J."/>
            <person name="Xu J."/>
            <person name="Wang Y."/>
            <person name="Yuan Z."/>
            <person name="Wen Y."/>
            <person name="Yao Z."/>
            <person name="Shen Y."/>
            <person name="Qiang B."/>
            <person name="Hou Y."/>
            <person name="Yu J."/>
            <person name="Jin Q."/>
        </authorList>
    </citation>
    <scope>NUCLEOTIDE SEQUENCE [LARGE SCALE GENOMIC DNA]</scope>
    <source>
        <strain>Ss046</strain>
    </source>
</reference>
<name>YBJQ_SHISS</name>
<comment type="similarity">
    <text evidence="1">Belongs to the UPF0145 family.</text>
</comment>
<sequence length="107" mass="11437">MQFSTTPTLEGQTIVEYCGVVTGEAILGANIFRDFFAGIRDIVGGRSGAYEKELRKAREIAFEELGSQARALGADAVVGIDIDYETVGQNGSMLMVSVSGTAVKTRR</sequence>
<keyword id="KW-1185">Reference proteome</keyword>
<feature type="chain" id="PRO_0000225847" description="UPF0145 protein YbjQ">
    <location>
        <begin position="1"/>
        <end position="107"/>
    </location>
</feature>
<protein>
    <recommendedName>
        <fullName evidence="1">UPF0145 protein YbjQ</fullName>
    </recommendedName>
</protein>
<proteinExistence type="inferred from homology"/>
<accession>Q3Z3R7</accession>
<gene>
    <name evidence="1" type="primary">ybjQ</name>
    <name type="ordered locus">SSON_0852</name>
</gene>